<evidence type="ECO:0000255" key="1">
    <source>
        <dbReference type="HAMAP-Rule" id="MF_00033"/>
    </source>
</evidence>
<accession>B7LFW0</accession>
<comment type="function">
    <text evidence="1">Cell wall formation. Catalyzes the transfer of a GlcNAc subunit on undecaprenyl-pyrophosphoryl-MurNAc-pentapeptide (lipid intermediate I) to form undecaprenyl-pyrophosphoryl-MurNAc-(pentapeptide)GlcNAc (lipid intermediate II).</text>
</comment>
<comment type="catalytic activity">
    <reaction evidence="1">
        <text>di-trans,octa-cis-undecaprenyl diphospho-N-acetyl-alpha-D-muramoyl-L-alanyl-D-glutamyl-meso-2,6-diaminopimeloyl-D-alanyl-D-alanine + UDP-N-acetyl-alpha-D-glucosamine = di-trans,octa-cis-undecaprenyl diphospho-[N-acetyl-alpha-D-glucosaminyl-(1-&gt;4)]-N-acetyl-alpha-D-muramoyl-L-alanyl-D-glutamyl-meso-2,6-diaminopimeloyl-D-alanyl-D-alanine + UDP + H(+)</text>
        <dbReference type="Rhea" id="RHEA:31227"/>
        <dbReference type="ChEBI" id="CHEBI:15378"/>
        <dbReference type="ChEBI" id="CHEBI:57705"/>
        <dbReference type="ChEBI" id="CHEBI:58223"/>
        <dbReference type="ChEBI" id="CHEBI:61387"/>
        <dbReference type="ChEBI" id="CHEBI:61388"/>
        <dbReference type="EC" id="2.4.1.227"/>
    </reaction>
</comment>
<comment type="pathway">
    <text evidence="1">Cell wall biogenesis; peptidoglycan biosynthesis.</text>
</comment>
<comment type="subcellular location">
    <subcellularLocation>
        <location evidence="1">Cell inner membrane</location>
        <topology evidence="1">Peripheral membrane protein</topology>
        <orientation evidence="1">Cytoplasmic side</orientation>
    </subcellularLocation>
</comment>
<comment type="similarity">
    <text evidence="1">Belongs to the glycosyltransferase 28 family. MurG subfamily.</text>
</comment>
<keyword id="KW-0131">Cell cycle</keyword>
<keyword id="KW-0132">Cell division</keyword>
<keyword id="KW-0997">Cell inner membrane</keyword>
<keyword id="KW-1003">Cell membrane</keyword>
<keyword id="KW-0133">Cell shape</keyword>
<keyword id="KW-0961">Cell wall biogenesis/degradation</keyword>
<keyword id="KW-0328">Glycosyltransferase</keyword>
<keyword id="KW-0472">Membrane</keyword>
<keyword id="KW-0573">Peptidoglycan synthesis</keyword>
<keyword id="KW-1185">Reference proteome</keyword>
<keyword id="KW-0808">Transferase</keyword>
<reference key="1">
    <citation type="journal article" date="2009" name="PLoS Genet.">
        <title>Organised genome dynamics in the Escherichia coli species results in highly diverse adaptive paths.</title>
        <authorList>
            <person name="Touchon M."/>
            <person name="Hoede C."/>
            <person name="Tenaillon O."/>
            <person name="Barbe V."/>
            <person name="Baeriswyl S."/>
            <person name="Bidet P."/>
            <person name="Bingen E."/>
            <person name="Bonacorsi S."/>
            <person name="Bouchier C."/>
            <person name="Bouvet O."/>
            <person name="Calteau A."/>
            <person name="Chiapello H."/>
            <person name="Clermont O."/>
            <person name="Cruveiller S."/>
            <person name="Danchin A."/>
            <person name="Diard M."/>
            <person name="Dossat C."/>
            <person name="Karoui M.E."/>
            <person name="Frapy E."/>
            <person name="Garry L."/>
            <person name="Ghigo J.M."/>
            <person name="Gilles A.M."/>
            <person name="Johnson J."/>
            <person name="Le Bouguenec C."/>
            <person name="Lescat M."/>
            <person name="Mangenot S."/>
            <person name="Martinez-Jehanne V."/>
            <person name="Matic I."/>
            <person name="Nassif X."/>
            <person name="Oztas S."/>
            <person name="Petit M.A."/>
            <person name="Pichon C."/>
            <person name="Rouy Z."/>
            <person name="Ruf C.S."/>
            <person name="Schneider D."/>
            <person name="Tourret J."/>
            <person name="Vacherie B."/>
            <person name="Vallenet D."/>
            <person name="Medigue C."/>
            <person name="Rocha E.P.C."/>
            <person name="Denamur E."/>
        </authorList>
    </citation>
    <scope>NUCLEOTIDE SEQUENCE [LARGE SCALE GENOMIC DNA]</scope>
    <source>
        <strain>55989 / EAEC</strain>
    </source>
</reference>
<sequence>MSGQGKRLMVMAGGTGGHVFPGLAVAHHLMAQGWQVRWLGTADRMEADLVPKHGIEIDFIRISGLRGKGIKALIAAPLRIFNAWRHARAIMKAYKPDVVLGMGGYVSGPGGLAAWSLGIPVVLHEQNGIAGLTNKWLAKIATKVMQAFPGAFPNAEVVGNPVRTDVLALPLPQQRLAGREGPVRVLVVGGSQGARILNQTMPQVAAKLGDSVTIWHQSGKGSQQSVEQAYAEAGQPQHKVTEFIDDMAAAYAWADVVVCRSGALTVSEIAAAGLPALFVPFQHKDRQQYWNALPLEKAGAAKIIEQPQLSVDAVANTLAGWSRETLLTMAERARAASIPDATERVANEVSRAARA</sequence>
<feature type="chain" id="PRO_1000192128" description="UDP-N-acetylglucosamine--N-acetylmuramyl-(pentapeptide) pyrophosphoryl-undecaprenol N-acetylglucosamine transferase">
    <location>
        <begin position="1"/>
        <end position="355"/>
    </location>
</feature>
<feature type="binding site" evidence="1">
    <location>
        <begin position="15"/>
        <end position="17"/>
    </location>
    <ligand>
        <name>UDP-N-acetyl-alpha-D-glucosamine</name>
        <dbReference type="ChEBI" id="CHEBI:57705"/>
    </ligand>
</feature>
<feature type="binding site" evidence="1">
    <location>
        <position position="127"/>
    </location>
    <ligand>
        <name>UDP-N-acetyl-alpha-D-glucosamine</name>
        <dbReference type="ChEBI" id="CHEBI:57705"/>
    </ligand>
</feature>
<feature type="binding site" evidence="1">
    <location>
        <position position="163"/>
    </location>
    <ligand>
        <name>UDP-N-acetyl-alpha-D-glucosamine</name>
        <dbReference type="ChEBI" id="CHEBI:57705"/>
    </ligand>
</feature>
<feature type="binding site" evidence="1">
    <location>
        <position position="191"/>
    </location>
    <ligand>
        <name>UDP-N-acetyl-alpha-D-glucosamine</name>
        <dbReference type="ChEBI" id="CHEBI:57705"/>
    </ligand>
</feature>
<feature type="binding site" evidence="1">
    <location>
        <position position="244"/>
    </location>
    <ligand>
        <name>UDP-N-acetyl-alpha-D-glucosamine</name>
        <dbReference type="ChEBI" id="CHEBI:57705"/>
    </ligand>
</feature>
<feature type="binding site" evidence="1">
    <location>
        <begin position="263"/>
        <end position="268"/>
    </location>
    <ligand>
        <name>UDP-N-acetyl-alpha-D-glucosamine</name>
        <dbReference type="ChEBI" id="CHEBI:57705"/>
    </ligand>
</feature>
<feature type="binding site" evidence="1">
    <location>
        <position position="288"/>
    </location>
    <ligand>
        <name>UDP-N-acetyl-alpha-D-glucosamine</name>
        <dbReference type="ChEBI" id="CHEBI:57705"/>
    </ligand>
</feature>
<dbReference type="EC" id="2.4.1.227" evidence="1"/>
<dbReference type="EMBL" id="CU928145">
    <property type="protein sequence ID" value="CAU95974.1"/>
    <property type="molecule type" value="Genomic_DNA"/>
</dbReference>
<dbReference type="RefSeq" id="WP_000016550.1">
    <property type="nucleotide sequence ID" value="NC_011748.1"/>
</dbReference>
<dbReference type="SMR" id="B7LFW0"/>
<dbReference type="CAZy" id="GT28">
    <property type="family name" value="Glycosyltransferase Family 28"/>
</dbReference>
<dbReference type="KEGG" id="eck:EC55989_0086"/>
<dbReference type="HOGENOM" id="CLU_037404_2_0_6"/>
<dbReference type="UniPathway" id="UPA00219"/>
<dbReference type="Proteomes" id="UP000000746">
    <property type="component" value="Chromosome"/>
</dbReference>
<dbReference type="GO" id="GO:0005886">
    <property type="term" value="C:plasma membrane"/>
    <property type="evidence" value="ECO:0007669"/>
    <property type="project" value="UniProtKB-SubCell"/>
</dbReference>
<dbReference type="GO" id="GO:0051991">
    <property type="term" value="F:UDP-N-acetyl-D-glucosamine:N-acetylmuramoyl-L-alanyl-D-glutamyl-meso-2,6-diaminopimelyl-D-alanyl-D-alanine-diphosphoundecaprenol 4-beta-N-acetylglucosaminlytransferase activity"/>
    <property type="evidence" value="ECO:0007669"/>
    <property type="project" value="RHEA"/>
</dbReference>
<dbReference type="GO" id="GO:0050511">
    <property type="term" value="F:undecaprenyldiphospho-muramoylpentapeptide beta-N-acetylglucosaminyltransferase activity"/>
    <property type="evidence" value="ECO:0007669"/>
    <property type="project" value="UniProtKB-UniRule"/>
</dbReference>
<dbReference type="GO" id="GO:0005975">
    <property type="term" value="P:carbohydrate metabolic process"/>
    <property type="evidence" value="ECO:0007669"/>
    <property type="project" value="InterPro"/>
</dbReference>
<dbReference type="GO" id="GO:0051301">
    <property type="term" value="P:cell division"/>
    <property type="evidence" value="ECO:0007669"/>
    <property type="project" value="UniProtKB-KW"/>
</dbReference>
<dbReference type="GO" id="GO:0071555">
    <property type="term" value="P:cell wall organization"/>
    <property type="evidence" value="ECO:0007669"/>
    <property type="project" value="UniProtKB-KW"/>
</dbReference>
<dbReference type="GO" id="GO:0030259">
    <property type="term" value="P:lipid glycosylation"/>
    <property type="evidence" value="ECO:0007669"/>
    <property type="project" value="UniProtKB-UniRule"/>
</dbReference>
<dbReference type="GO" id="GO:0009252">
    <property type="term" value="P:peptidoglycan biosynthetic process"/>
    <property type="evidence" value="ECO:0007669"/>
    <property type="project" value="UniProtKB-UniRule"/>
</dbReference>
<dbReference type="GO" id="GO:0008360">
    <property type="term" value="P:regulation of cell shape"/>
    <property type="evidence" value="ECO:0007669"/>
    <property type="project" value="UniProtKB-KW"/>
</dbReference>
<dbReference type="CDD" id="cd03785">
    <property type="entry name" value="GT28_MurG"/>
    <property type="match status" value="1"/>
</dbReference>
<dbReference type="FunFam" id="3.40.50.2000:FF:000016">
    <property type="entry name" value="UDP-N-acetylglucosamine--N-acetylmuramyl-(pentapeptide) pyrophosphoryl-undecaprenol N-acetylglucosamine transferase"/>
    <property type="match status" value="1"/>
</dbReference>
<dbReference type="FunFam" id="3.40.50.2000:FF:000018">
    <property type="entry name" value="UDP-N-acetylglucosamine--N-acetylmuramyl-(pentapeptide) pyrophosphoryl-undecaprenol N-acetylglucosamine transferase"/>
    <property type="match status" value="1"/>
</dbReference>
<dbReference type="Gene3D" id="3.40.50.2000">
    <property type="entry name" value="Glycogen Phosphorylase B"/>
    <property type="match status" value="2"/>
</dbReference>
<dbReference type="HAMAP" id="MF_00033">
    <property type="entry name" value="MurG"/>
    <property type="match status" value="1"/>
</dbReference>
<dbReference type="InterPro" id="IPR006009">
    <property type="entry name" value="GlcNAc_MurG"/>
</dbReference>
<dbReference type="InterPro" id="IPR007235">
    <property type="entry name" value="Glyco_trans_28_C"/>
</dbReference>
<dbReference type="InterPro" id="IPR004276">
    <property type="entry name" value="GlycoTrans_28_N"/>
</dbReference>
<dbReference type="NCBIfam" id="TIGR01133">
    <property type="entry name" value="murG"/>
    <property type="match status" value="1"/>
</dbReference>
<dbReference type="PANTHER" id="PTHR21015:SF22">
    <property type="entry name" value="GLYCOSYLTRANSFERASE"/>
    <property type="match status" value="1"/>
</dbReference>
<dbReference type="PANTHER" id="PTHR21015">
    <property type="entry name" value="UDP-N-ACETYLGLUCOSAMINE--N-ACETYLMURAMYL-(PENTAPEPTIDE) PYROPHOSPHORYL-UNDECAPRENOL N-ACETYLGLUCOSAMINE TRANSFERASE 1"/>
    <property type="match status" value="1"/>
</dbReference>
<dbReference type="Pfam" id="PF04101">
    <property type="entry name" value="Glyco_tran_28_C"/>
    <property type="match status" value="1"/>
</dbReference>
<dbReference type="Pfam" id="PF03033">
    <property type="entry name" value="Glyco_transf_28"/>
    <property type="match status" value="1"/>
</dbReference>
<dbReference type="SUPFAM" id="SSF53756">
    <property type="entry name" value="UDP-Glycosyltransferase/glycogen phosphorylase"/>
    <property type="match status" value="1"/>
</dbReference>
<organism>
    <name type="scientific">Escherichia coli (strain 55989 / EAEC)</name>
    <dbReference type="NCBI Taxonomy" id="585055"/>
    <lineage>
        <taxon>Bacteria</taxon>
        <taxon>Pseudomonadati</taxon>
        <taxon>Pseudomonadota</taxon>
        <taxon>Gammaproteobacteria</taxon>
        <taxon>Enterobacterales</taxon>
        <taxon>Enterobacteriaceae</taxon>
        <taxon>Escherichia</taxon>
    </lineage>
</organism>
<protein>
    <recommendedName>
        <fullName evidence="1">UDP-N-acetylglucosamine--N-acetylmuramyl-(pentapeptide) pyrophosphoryl-undecaprenol N-acetylglucosamine transferase</fullName>
        <ecNumber evidence="1">2.4.1.227</ecNumber>
    </recommendedName>
    <alternativeName>
        <fullName evidence="1">Undecaprenyl-PP-MurNAc-pentapeptide-UDPGlcNAc GlcNAc transferase</fullName>
    </alternativeName>
</protein>
<proteinExistence type="inferred from homology"/>
<gene>
    <name evidence="1" type="primary">murG</name>
    <name type="ordered locus">EC55989_0086</name>
</gene>
<name>MURG_ECO55</name>